<reference key="1">
    <citation type="journal article" date="2005" name="PLoS Biol.">
        <title>The genome sequence of Rickettsia felis identifies the first putative conjugative plasmid in an obligate intracellular parasite.</title>
        <authorList>
            <person name="Ogata H."/>
            <person name="Renesto P."/>
            <person name="Audic S."/>
            <person name="Robert C."/>
            <person name="Blanc G."/>
            <person name="Fournier P.-E."/>
            <person name="Parinello H."/>
            <person name="Claverie J.-M."/>
            <person name="Raoult D."/>
        </authorList>
    </citation>
    <scope>NUCLEOTIDE SEQUENCE [LARGE SCALE GENOMIC DNA]</scope>
    <source>
        <strain>ATCC VR-1525 / URRWXCal2</strain>
    </source>
</reference>
<keyword id="KW-0408">Iron</keyword>
<keyword id="KW-0479">Metal-binding</keyword>
<feature type="chain" id="PRO_0000193956" description="Iron-sulfur cluster assembly protein CyaY">
    <location>
        <begin position="1"/>
        <end position="101"/>
    </location>
</feature>
<gene>
    <name evidence="1" type="primary">cyaY</name>
    <name type="ordered locus">RF_0522</name>
</gene>
<proteinExistence type="inferred from homology"/>
<evidence type="ECO:0000255" key="1">
    <source>
        <dbReference type="HAMAP-Rule" id="MF_00142"/>
    </source>
</evidence>
<comment type="function">
    <text evidence="1">Involved in iron-sulfur (Fe-S) cluster assembly. May act as a regulator of Fe-S biogenesis.</text>
</comment>
<comment type="similarity">
    <text evidence="1">Belongs to the frataxin family.</text>
</comment>
<sequence length="101" mass="11515">MNNTEFSKIAETTIAYIADKIEEQDKEASIDVDLQGDILNLDTDKGIYVINKQSAAKEIWLSSPVSGPYHFFYEQGKWKNKIGLELMAILTEELNIKFDNI</sequence>
<name>CYAY_RICFE</name>
<protein>
    <recommendedName>
        <fullName evidence="1">Iron-sulfur cluster assembly protein CyaY</fullName>
    </recommendedName>
</protein>
<dbReference type="EMBL" id="CP000053">
    <property type="protein sequence ID" value="AAY61373.1"/>
    <property type="molecule type" value="Genomic_DNA"/>
</dbReference>
<dbReference type="SMR" id="Q4UM50"/>
<dbReference type="STRING" id="315456.RF_0522"/>
<dbReference type="KEGG" id="rfe:RF_0522"/>
<dbReference type="eggNOG" id="COG1965">
    <property type="taxonomic scope" value="Bacteria"/>
</dbReference>
<dbReference type="HOGENOM" id="CLU_080880_4_1_5"/>
<dbReference type="OrthoDB" id="8480400at2"/>
<dbReference type="Proteomes" id="UP000008548">
    <property type="component" value="Chromosome"/>
</dbReference>
<dbReference type="GO" id="GO:0005737">
    <property type="term" value="C:cytoplasm"/>
    <property type="evidence" value="ECO:0007669"/>
    <property type="project" value="UniProtKB-ARBA"/>
</dbReference>
<dbReference type="GO" id="GO:0051537">
    <property type="term" value="F:2 iron, 2 sulfur cluster binding"/>
    <property type="evidence" value="ECO:0007669"/>
    <property type="project" value="TreeGrafter"/>
</dbReference>
<dbReference type="GO" id="GO:0008199">
    <property type="term" value="F:ferric iron binding"/>
    <property type="evidence" value="ECO:0007669"/>
    <property type="project" value="InterPro"/>
</dbReference>
<dbReference type="GO" id="GO:0008198">
    <property type="term" value="F:ferrous iron binding"/>
    <property type="evidence" value="ECO:0007669"/>
    <property type="project" value="TreeGrafter"/>
</dbReference>
<dbReference type="GO" id="GO:0004322">
    <property type="term" value="F:ferroxidase activity"/>
    <property type="evidence" value="ECO:0007669"/>
    <property type="project" value="TreeGrafter"/>
</dbReference>
<dbReference type="GO" id="GO:0034986">
    <property type="term" value="F:iron chaperone activity"/>
    <property type="evidence" value="ECO:0007669"/>
    <property type="project" value="TreeGrafter"/>
</dbReference>
<dbReference type="GO" id="GO:0006879">
    <property type="term" value="P:intracellular iron ion homeostasis"/>
    <property type="evidence" value="ECO:0007669"/>
    <property type="project" value="TreeGrafter"/>
</dbReference>
<dbReference type="GO" id="GO:0016226">
    <property type="term" value="P:iron-sulfur cluster assembly"/>
    <property type="evidence" value="ECO:0007669"/>
    <property type="project" value="UniProtKB-UniRule"/>
</dbReference>
<dbReference type="Gene3D" id="3.30.920.10">
    <property type="entry name" value="Frataxin/CyaY"/>
    <property type="match status" value="1"/>
</dbReference>
<dbReference type="HAMAP" id="MF_00142">
    <property type="entry name" value="CyaY"/>
    <property type="match status" value="1"/>
</dbReference>
<dbReference type="InterPro" id="IPR047584">
    <property type="entry name" value="CyaY"/>
</dbReference>
<dbReference type="InterPro" id="IPR002908">
    <property type="entry name" value="Frataxin/CyaY"/>
</dbReference>
<dbReference type="InterPro" id="IPR036524">
    <property type="entry name" value="Frataxin/CyaY_sf"/>
</dbReference>
<dbReference type="InterPro" id="IPR020895">
    <property type="entry name" value="Frataxin_CS"/>
</dbReference>
<dbReference type="NCBIfam" id="TIGR03421">
    <property type="entry name" value="FeS_CyaY"/>
    <property type="match status" value="1"/>
</dbReference>
<dbReference type="PANTHER" id="PTHR16821">
    <property type="entry name" value="FRATAXIN"/>
    <property type="match status" value="1"/>
</dbReference>
<dbReference type="PANTHER" id="PTHR16821:SF2">
    <property type="entry name" value="FRATAXIN, MITOCHONDRIAL"/>
    <property type="match status" value="1"/>
</dbReference>
<dbReference type="Pfam" id="PF01491">
    <property type="entry name" value="Frataxin_Cyay"/>
    <property type="match status" value="1"/>
</dbReference>
<dbReference type="PRINTS" id="PR00904">
    <property type="entry name" value="FRATAXIN"/>
</dbReference>
<dbReference type="SMART" id="SM01219">
    <property type="entry name" value="Frataxin_Cyay"/>
    <property type="match status" value="1"/>
</dbReference>
<dbReference type="SUPFAM" id="SSF55387">
    <property type="entry name" value="Frataxin/Nqo15-like"/>
    <property type="match status" value="1"/>
</dbReference>
<dbReference type="PROSITE" id="PS01344">
    <property type="entry name" value="FRATAXIN_1"/>
    <property type="match status" value="1"/>
</dbReference>
<dbReference type="PROSITE" id="PS50810">
    <property type="entry name" value="FRATAXIN_2"/>
    <property type="match status" value="1"/>
</dbReference>
<organism>
    <name type="scientific">Rickettsia felis (strain ATCC VR-1525 / URRWXCal2)</name>
    <name type="common">Rickettsia azadi</name>
    <dbReference type="NCBI Taxonomy" id="315456"/>
    <lineage>
        <taxon>Bacteria</taxon>
        <taxon>Pseudomonadati</taxon>
        <taxon>Pseudomonadota</taxon>
        <taxon>Alphaproteobacteria</taxon>
        <taxon>Rickettsiales</taxon>
        <taxon>Rickettsiaceae</taxon>
        <taxon>Rickettsieae</taxon>
        <taxon>Rickettsia</taxon>
        <taxon>spotted fever group</taxon>
    </lineage>
</organism>
<accession>Q4UM50</accession>